<evidence type="ECO:0000255" key="1">
    <source>
        <dbReference type="HAMAP-Rule" id="MF_01184"/>
    </source>
</evidence>
<organism>
    <name type="scientific">Phocaeicola vulgatus (strain ATCC 8482 / DSM 1447 / JCM 5826 / CCUG 4940 / NBRC 14291 / NCTC 11154)</name>
    <name type="common">Bacteroides vulgatus</name>
    <dbReference type="NCBI Taxonomy" id="435590"/>
    <lineage>
        <taxon>Bacteria</taxon>
        <taxon>Pseudomonadati</taxon>
        <taxon>Bacteroidota</taxon>
        <taxon>Bacteroidia</taxon>
        <taxon>Bacteroidales</taxon>
        <taxon>Bacteroidaceae</taxon>
        <taxon>Phocaeicola</taxon>
    </lineage>
</organism>
<accession>A6L3C5</accession>
<keyword id="KW-0963">Cytoplasm</keyword>
<keyword id="KW-0328">Glycosyltransferase</keyword>
<keyword id="KW-0660">Purine salvage</keyword>
<keyword id="KW-0808">Transferase</keyword>
<reference key="1">
    <citation type="journal article" date="2007" name="PLoS Biol.">
        <title>Evolution of symbiotic bacteria in the distal human intestine.</title>
        <authorList>
            <person name="Xu J."/>
            <person name="Mahowald M.A."/>
            <person name="Ley R.E."/>
            <person name="Lozupone C.A."/>
            <person name="Hamady M."/>
            <person name="Martens E.C."/>
            <person name="Henrissat B."/>
            <person name="Coutinho P.M."/>
            <person name="Minx P."/>
            <person name="Latreille P."/>
            <person name="Cordum H."/>
            <person name="Van Brunt A."/>
            <person name="Kim K."/>
            <person name="Fulton R.S."/>
            <person name="Fulton L.A."/>
            <person name="Clifton S.W."/>
            <person name="Wilson R.K."/>
            <person name="Knight R.D."/>
            <person name="Gordon J.I."/>
        </authorList>
    </citation>
    <scope>NUCLEOTIDE SEQUENCE [LARGE SCALE GENOMIC DNA]</scope>
    <source>
        <strain>ATCC 8482 / DSM 1447 / JCM 5826 / CCUG 4940 / NBRC 14291 / NCTC 11154</strain>
    </source>
</reference>
<sequence>MKALKERILRDGKCFEGGILKVDNFINHQMDPILMKSIAVEFVRRFASTNINKVMTIEASGIAPAIMVGYLLELPVVFAKKKKPVTMENMLTTSVYSFTKDRSYDVCVSKDFLSKGDRVLFIDDFLANGNAAKGIIDLVEKAGAELSGMGFIIEKAFQHGGDYLRNAGIRVESLAIIESLDNCEIKIR</sequence>
<proteinExistence type="inferred from homology"/>
<gene>
    <name evidence="1" type="primary">xpt</name>
    <name type="ordered locus">BVU_2532</name>
</gene>
<dbReference type="EC" id="2.4.2.22" evidence="1"/>
<dbReference type="EMBL" id="CP000139">
    <property type="protein sequence ID" value="ABR40189.1"/>
    <property type="molecule type" value="Genomic_DNA"/>
</dbReference>
<dbReference type="RefSeq" id="WP_005847479.1">
    <property type="nucleotide sequence ID" value="NZ_JANSWM010000062.1"/>
</dbReference>
<dbReference type="SMR" id="A6L3C5"/>
<dbReference type="STRING" id="435590.BVU_2532"/>
<dbReference type="PaxDb" id="435590-BVU_2532"/>
<dbReference type="GeneID" id="93446371"/>
<dbReference type="KEGG" id="bvu:BVU_2532"/>
<dbReference type="eggNOG" id="COG0503">
    <property type="taxonomic scope" value="Bacteria"/>
</dbReference>
<dbReference type="HOGENOM" id="CLU_099015_0_0_10"/>
<dbReference type="BioCyc" id="BVUL435590:G1G59-2636-MONOMER"/>
<dbReference type="UniPathway" id="UPA00602">
    <property type="reaction ID" value="UER00658"/>
</dbReference>
<dbReference type="Proteomes" id="UP000002861">
    <property type="component" value="Chromosome"/>
</dbReference>
<dbReference type="GO" id="GO:0005737">
    <property type="term" value="C:cytoplasm"/>
    <property type="evidence" value="ECO:0007669"/>
    <property type="project" value="UniProtKB-SubCell"/>
</dbReference>
<dbReference type="GO" id="GO:0000310">
    <property type="term" value="F:xanthine phosphoribosyltransferase activity"/>
    <property type="evidence" value="ECO:0007669"/>
    <property type="project" value="UniProtKB-UniRule"/>
</dbReference>
<dbReference type="GO" id="GO:0006166">
    <property type="term" value="P:purine ribonucleoside salvage"/>
    <property type="evidence" value="ECO:0007669"/>
    <property type="project" value="UniProtKB-KW"/>
</dbReference>
<dbReference type="GO" id="GO:0046110">
    <property type="term" value="P:xanthine metabolic process"/>
    <property type="evidence" value="ECO:0007669"/>
    <property type="project" value="InterPro"/>
</dbReference>
<dbReference type="GO" id="GO:0032265">
    <property type="term" value="P:XMP salvage"/>
    <property type="evidence" value="ECO:0007669"/>
    <property type="project" value="UniProtKB-UniRule"/>
</dbReference>
<dbReference type="CDD" id="cd06223">
    <property type="entry name" value="PRTases_typeI"/>
    <property type="match status" value="1"/>
</dbReference>
<dbReference type="Gene3D" id="3.40.50.2020">
    <property type="match status" value="1"/>
</dbReference>
<dbReference type="HAMAP" id="MF_01184">
    <property type="entry name" value="XPRTase"/>
    <property type="match status" value="1"/>
</dbReference>
<dbReference type="InterPro" id="IPR000836">
    <property type="entry name" value="PRibTrfase_dom"/>
</dbReference>
<dbReference type="InterPro" id="IPR029057">
    <property type="entry name" value="PRTase-like"/>
</dbReference>
<dbReference type="InterPro" id="IPR050118">
    <property type="entry name" value="Pur/Pyrimidine_PRTase"/>
</dbReference>
<dbReference type="InterPro" id="IPR010079">
    <property type="entry name" value="Xanthine_PRibTrfase"/>
</dbReference>
<dbReference type="NCBIfam" id="NF006671">
    <property type="entry name" value="PRK09219.1"/>
    <property type="match status" value="1"/>
</dbReference>
<dbReference type="NCBIfam" id="TIGR01744">
    <property type="entry name" value="XPRTase"/>
    <property type="match status" value="1"/>
</dbReference>
<dbReference type="PANTHER" id="PTHR43864">
    <property type="entry name" value="HYPOXANTHINE/GUANINE PHOSPHORIBOSYLTRANSFERASE"/>
    <property type="match status" value="1"/>
</dbReference>
<dbReference type="PANTHER" id="PTHR43864:SF1">
    <property type="entry name" value="XANTHINE PHOSPHORIBOSYLTRANSFERASE"/>
    <property type="match status" value="1"/>
</dbReference>
<dbReference type="Pfam" id="PF00156">
    <property type="entry name" value="Pribosyltran"/>
    <property type="match status" value="1"/>
</dbReference>
<dbReference type="SUPFAM" id="SSF53271">
    <property type="entry name" value="PRTase-like"/>
    <property type="match status" value="1"/>
</dbReference>
<feature type="chain" id="PRO_0000339673" description="Xanthine phosphoribosyltransferase">
    <location>
        <begin position="1"/>
        <end position="188"/>
    </location>
</feature>
<feature type="binding site" evidence="1">
    <location>
        <position position="20"/>
    </location>
    <ligand>
        <name>xanthine</name>
        <dbReference type="ChEBI" id="CHEBI:17712"/>
    </ligand>
</feature>
<feature type="binding site" evidence="1">
    <location>
        <position position="27"/>
    </location>
    <ligand>
        <name>xanthine</name>
        <dbReference type="ChEBI" id="CHEBI:17712"/>
    </ligand>
</feature>
<feature type="binding site" evidence="1">
    <location>
        <begin position="127"/>
        <end position="131"/>
    </location>
    <ligand>
        <name>5-phospho-alpha-D-ribose 1-diphosphate</name>
        <dbReference type="ChEBI" id="CHEBI:58017"/>
    </ligand>
</feature>
<feature type="binding site" evidence="1">
    <location>
        <position position="155"/>
    </location>
    <ligand>
        <name>xanthine</name>
        <dbReference type="ChEBI" id="CHEBI:17712"/>
    </ligand>
</feature>
<protein>
    <recommendedName>
        <fullName evidence="1">Xanthine phosphoribosyltransferase</fullName>
        <shortName evidence="1">XPRTase</shortName>
        <ecNumber evidence="1">2.4.2.22</ecNumber>
    </recommendedName>
</protein>
<comment type="function">
    <text evidence="1">Converts the preformed base xanthine, a product of nucleic acid breakdown, to xanthosine 5'-monophosphate (XMP), so it can be reused for RNA or DNA synthesis.</text>
</comment>
<comment type="catalytic activity">
    <reaction evidence="1">
        <text>XMP + diphosphate = xanthine + 5-phospho-alpha-D-ribose 1-diphosphate</text>
        <dbReference type="Rhea" id="RHEA:10800"/>
        <dbReference type="ChEBI" id="CHEBI:17712"/>
        <dbReference type="ChEBI" id="CHEBI:33019"/>
        <dbReference type="ChEBI" id="CHEBI:57464"/>
        <dbReference type="ChEBI" id="CHEBI:58017"/>
        <dbReference type="EC" id="2.4.2.22"/>
    </reaction>
</comment>
<comment type="pathway">
    <text evidence="1">Purine metabolism; XMP biosynthesis via salvage pathway; XMP from xanthine: step 1/1.</text>
</comment>
<comment type="subunit">
    <text evidence="1">Homodimer.</text>
</comment>
<comment type="subcellular location">
    <subcellularLocation>
        <location evidence="1">Cytoplasm</location>
    </subcellularLocation>
</comment>
<comment type="similarity">
    <text evidence="1">Belongs to the purine/pyrimidine phosphoribosyltransferase family. Xpt subfamily.</text>
</comment>
<name>XPT_PHOV8</name>